<proteinExistence type="inferred from homology"/>
<comment type="catalytic activity">
    <reaction evidence="1">
        <text>N-(5-phospho-beta-D-ribosyl)anthranilate = 1-(2-carboxyphenylamino)-1-deoxy-D-ribulose 5-phosphate</text>
        <dbReference type="Rhea" id="RHEA:21540"/>
        <dbReference type="ChEBI" id="CHEBI:18277"/>
        <dbReference type="ChEBI" id="CHEBI:58613"/>
        <dbReference type="EC" id="5.3.1.24"/>
    </reaction>
</comment>
<comment type="pathway">
    <text evidence="1">Amino-acid biosynthesis; L-tryptophan biosynthesis; L-tryptophan from chorismate: step 3/5.</text>
</comment>
<comment type="similarity">
    <text evidence="1">Belongs to the TrpF family.</text>
</comment>
<evidence type="ECO:0000255" key="1">
    <source>
        <dbReference type="HAMAP-Rule" id="MF_00135"/>
    </source>
</evidence>
<name>TRPF_GEOTN</name>
<accession>A4IQ83</accession>
<organism>
    <name type="scientific">Geobacillus thermodenitrificans (strain NG80-2)</name>
    <dbReference type="NCBI Taxonomy" id="420246"/>
    <lineage>
        <taxon>Bacteria</taxon>
        <taxon>Bacillati</taxon>
        <taxon>Bacillota</taxon>
        <taxon>Bacilli</taxon>
        <taxon>Bacillales</taxon>
        <taxon>Anoxybacillaceae</taxon>
        <taxon>Geobacillus</taxon>
    </lineage>
</organism>
<dbReference type="EC" id="5.3.1.24" evidence="1"/>
<dbReference type="EMBL" id="CP000557">
    <property type="protein sequence ID" value="ABO67487.1"/>
    <property type="molecule type" value="Genomic_DNA"/>
</dbReference>
<dbReference type="SMR" id="A4IQ83"/>
<dbReference type="KEGG" id="gtn:GTNG_2135"/>
<dbReference type="eggNOG" id="COG0135">
    <property type="taxonomic scope" value="Bacteria"/>
</dbReference>
<dbReference type="HOGENOM" id="CLU_076364_1_1_9"/>
<dbReference type="UniPathway" id="UPA00035">
    <property type="reaction ID" value="UER00042"/>
</dbReference>
<dbReference type="Proteomes" id="UP000001578">
    <property type="component" value="Chromosome"/>
</dbReference>
<dbReference type="GO" id="GO:0004640">
    <property type="term" value="F:phosphoribosylanthranilate isomerase activity"/>
    <property type="evidence" value="ECO:0007669"/>
    <property type="project" value="UniProtKB-UniRule"/>
</dbReference>
<dbReference type="GO" id="GO:0000162">
    <property type="term" value="P:L-tryptophan biosynthetic process"/>
    <property type="evidence" value="ECO:0007669"/>
    <property type="project" value="UniProtKB-UniRule"/>
</dbReference>
<dbReference type="CDD" id="cd00405">
    <property type="entry name" value="PRAI"/>
    <property type="match status" value="1"/>
</dbReference>
<dbReference type="Gene3D" id="3.20.20.70">
    <property type="entry name" value="Aldolase class I"/>
    <property type="match status" value="1"/>
</dbReference>
<dbReference type="HAMAP" id="MF_00135">
    <property type="entry name" value="PRAI"/>
    <property type="match status" value="1"/>
</dbReference>
<dbReference type="InterPro" id="IPR013785">
    <property type="entry name" value="Aldolase_TIM"/>
</dbReference>
<dbReference type="InterPro" id="IPR001240">
    <property type="entry name" value="PRAI_dom"/>
</dbReference>
<dbReference type="InterPro" id="IPR011060">
    <property type="entry name" value="RibuloseP-bd_barrel"/>
</dbReference>
<dbReference type="InterPro" id="IPR044643">
    <property type="entry name" value="TrpF_fam"/>
</dbReference>
<dbReference type="NCBIfam" id="NF002301">
    <property type="entry name" value="PRK01222.2-1"/>
    <property type="match status" value="1"/>
</dbReference>
<dbReference type="PANTHER" id="PTHR42894">
    <property type="entry name" value="N-(5'-PHOSPHORIBOSYL)ANTHRANILATE ISOMERASE"/>
    <property type="match status" value="1"/>
</dbReference>
<dbReference type="PANTHER" id="PTHR42894:SF1">
    <property type="entry name" value="N-(5'-PHOSPHORIBOSYL)ANTHRANILATE ISOMERASE"/>
    <property type="match status" value="1"/>
</dbReference>
<dbReference type="Pfam" id="PF00697">
    <property type="entry name" value="PRAI"/>
    <property type="match status" value="1"/>
</dbReference>
<dbReference type="SUPFAM" id="SSF51366">
    <property type="entry name" value="Ribulose-phoshate binding barrel"/>
    <property type="match status" value="1"/>
</dbReference>
<protein>
    <recommendedName>
        <fullName evidence="1">N-(5'-phosphoribosyl)anthranilate isomerase</fullName>
        <shortName evidence="1">PRAI</shortName>
        <ecNumber evidence="1">5.3.1.24</ecNumber>
    </recommendedName>
</protein>
<feature type="chain" id="PRO_1000018595" description="N-(5'-phosphoribosyl)anthranilate isomerase">
    <location>
        <begin position="1"/>
        <end position="221"/>
    </location>
</feature>
<reference key="1">
    <citation type="journal article" date="2007" name="Proc. Natl. Acad. Sci. U.S.A.">
        <title>Genome and proteome of long-chain alkane degrading Geobacillus thermodenitrificans NG80-2 isolated from a deep-subsurface oil reservoir.</title>
        <authorList>
            <person name="Feng L."/>
            <person name="Wang W."/>
            <person name="Cheng J."/>
            <person name="Ren Y."/>
            <person name="Zhao G."/>
            <person name="Gao C."/>
            <person name="Tang Y."/>
            <person name="Liu X."/>
            <person name="Han W."/>
            <person name="Peng X."/>
            <person name="Liu R."/>
            <person name="Wang L."/>
        </authorList>
    </citation>
    <scope>NUCLEOTIDE SEQUENCE [LARGE SCALE GENOMIC DNA]</scope>
    <source>
        <strain>NG80-2</strain>
    </source>
</reference>
<keyword id="KW-0028">Amino-acid biosynthesis</keyword>
<keyword id="KW-0057">Aromatic amino acid biosynthesis</keyword>
<keyword id="KW-0413">Isomerase</keyword>
<keyword id="KW-0822">Tryptophan biosynthesis</keyword>
<sequence length="221" mass="23927">MAMVRLKYCGNRSADDVQVALASGADYLGFIFTESKRNVSPEEVKHWLALASLGDKQLVGVFVNASVDQIASVTEQLPLHVVQCHGHETPAELAVVKEATRLSVWKAIHHDDGALETMKQYAGVADGYVVDSRVAGAWGGTGVSFDWEAVPRYLEEAARQGVPCFIAGGITPDNIERLLAYRPDGIDISSGIETDGRKDPAKMKQIEEKTKQYLAVGKGAK</sequence>
<gene>
    <name evidence="1" type="primary">trpF</name>
    <name type="ordered locus">GTNG_2135</name>
</gene>